<gene>
    <name type="primary">teg</name>
</gene>
<proteinExistence type="inferred from homology"/>
<comment type="function">
    <text evidence="1">Probable lipid hydrolase.</text>
</comment>
<keyword id="KW-0378">Hydrolase</keyword>
<keyword id="KW-0442">Lipid degradation</keyword>
<keyword id="KW-0443">Lipid metabolism</keyword>
<accession>P30420</accession>
<organism>
    <name type="scientific">Priestia megaterium (strain ATCC 14581 / DSM 32 / CCUG 1817 / JCM 2506 / NBRC 15308 / NCIMB 9376 / NCTC 10342 / NRRL B-14308 / VKM B-512 / Ford 19)</name>
    <name type="common">Bacillus megaterium</name>
    <dbReference type="NCBI Taxonomy" id="1348623"/>
    <lineage>
        <taxon>Bacteria</taxon>
        <taxon>Bacillati</taxon>
        <taxon>Bacillota</taxon>
        <taxon>Bacilli</taxon>
        <taxon>Bacillales</taxon>
        <taxon>Bacillaceae</taxon>
        <taxon>Priestia</taxon>
    </lineage>
</organism>
<protein>
    <recommendedName>
        <fullName>Protein teg</fullName>
        <ecNumber>3.1.1.-</ecNumber>
    </recommendedName>
</protein>
<dbReference type="EC" id="3.1.1.-"/>
<dbReference type="EMBL" id="X53048">
    <property type="protein sequence ID" value="CAA37216.1"/>
    <property type="molecule type" value="Genomic_DNA"/>
</dbReference>
<dbReference type="PIR" id="S24923">
    <property type="entry name" value="S24923"/>
</dbReference>
<dbReference type="SMR" id="P30420"/>
<dbReference type="GO" id="GO:0016787">
    <property type="term" value="F:hydrolase activity"/>
    <property type="evidence" value="ECO:0007669"/>
    <property type="project" value="UniProtKB-KW"/>
</dbReference>
<dbReference type="GO" id="GO:0016042">
    <property type="term" value="P:lipid catabolic process"/>
    <property type="evidence" value="ECO:0007669"/>
    <property type="project" value="UniProtKB-KW"/>
</dbReference>
<dbReference type="Gene3D" id="3.40.1090.10">
    <property type="entry name" value="Cytosolic phospholipase A2 catalytic domain"/>
    <property type="match status" value="1"/>
</dbReference>
<dbReference type="InterPro" id="IPR016035">
    <property type="entry name" value="Acyl_Trfase/lysoPLipase"/>
</dbReference>
<dbReference type="InterPro" id="IPR002641">
    <property type="entry name" value="PNPLA_dom"/>
</dbReference>
<dbReference type="InterPro" id="IPR047156">
    <property type="entry name" value="Teg/CotR/CapV-like"/>
</dbReference>
<dbReference type="PANTHER" id="PTHR24138">
    <property type="entry name" value="INTRACELLLAR PHOSPHOLIPASE A FAMILY"/>
    <property type="match status" value="1"/>
</dbReference>
<dbReference type="PANTHER" id="PTHR24138:SF10">
    <property type="entry name" value="PHOSPHOLIPASE A2"/>
    <property type="match status" value="1"/>
</dbReference>
<dbReference type="Pfam" id="PF01734">
    <property type="entry name" value="Patatin"/>
    <property type="match status" value="1"/>
</dbReference>
<dbReference type="SUPFAM" id="SSF52151">
    <property type="entry name" value="FabD/lysophospholipase-like"/>
    <property type="match status" value="1"/>
</dbReference>
<dbReference type="PROSITE" id="PS51635">
    <property type="entry name" value="PNPLA"/>
    <property type="match status" value="1"/>
</dbReference>
<sequence length="318" mass="35263">MTKYRIITFDGGGTLGALSLQLLNRLAYQNPKLISETNVFSGNSIGSFTALALASGRSPEETFDFFKDQILPAFSVSRPGGPVFNQQVPYSGLIKAIRTFFPRDLRLRDLKKRIVVPAFHLFAPELNRWNPVLFHNFLGSPYLNEKASDVILRSSAAPATQRAYQNYVDGYTVATNTSTASIAFAVGKAKQPLDQIAVLSIGTGEQPTQLRRDTKGWGMVSADNILPEDMEDLPPNWGVLLDRSPNEPLLPFLQIISGGSSYYESMVSSELLGDQFFRLNPRIPNFSKTDPSVVPALISIANKTNLRPAFQFIERNWN</sequence>
<reference key="1">
    <citation type="submission" date="1990-05" db="EMBL/GenBank/DDBJ databases">
        <authorList>
            <person name="Temann U.A."/>
        </authorList>
    </citation>
    <scope>NUCLEOTIDE SEQUENCE [GENOMIC DNA]</scope>
    <source>
        <strain>ATCC 14581 / DSM 32 / CCUG 1817 / JCM 2506 / NBRC 15308 / NCIMB 9376 / NCTC 10342 / NRRL B-14308 / VKM B-512 / Ford 19</strain>
    </source>
</reference>
<name>TEG_PRIM2</name>
<evidence type="ECO:0000250" key="1"/>
<evidence type="ECO:0000255" key="2">
    <source>
        <dbReference type="PROSITE-ProRule" id="PRU01161"/>
    </source>
</evidence>
<feature type="chain" id="PRO_0000072478" description="Protein teg">
    <location>
        <begin position="1"/>
        <end position="318"/>
    </location>
</feature>
<feature type="domain" description="PNPLA" evidence="2">
    <location>
        <begin position="7"/>
        <end position="182"/>
    </location>
</feature>
<feature type="short sequence motif" description="GXGXXG" evidence="2">
    <location>
        <begin position="11"/>
        <end position="16"/>
    </location>
</feature>
<feature type="short sequence motif" description="GXSXG" evidence="2">
    <location>
        <begin position="42"/>
        <end position="46"/>
    </location>
</feature>
<feature type="active site" description="Nucleophile" evidence="2">
    <location>
        <position position="44"/>
    </location>
</feature>
<feature type="active site" description="Proton acceptor" evidence="2">
    <location>
        <position position="169"/>
    </location>
</feature>